<gene>
    <name evidence="1" type="primary">rhaR</name>
    <name type="ordered locus">ECA0442</name>
</gene>
<feature type="chain" id="PRO_0000194554" description="HTH-type transcriptional activator RhaR">
    <location>
        <begin position="1"/>
        <end position="284"/>
    </location>
</feature>
<feature type="domain" description="HTH araC/xylS-type" evidence="1">
    <location>
        <begin position="181"/>
        <end position="279"/>
    </location>
</feature>
<feature type="DNA-binding region" description="H-T-H motif" evidence="1">
    <location>
        <begin position="198"/>
        <end position="219"/>
    </location>
</feature>
<feature type="DNA-binding region" description="H-T-H motif" evidence="1">
    <location>
        <begin position="246"/>
        <end position="269"/>
    </location>
</feature>
<feature type="site" description="Interaction with sigma-70" evidence="1">
    <location>
        <position position="248"/>
    </location>
</feature>
<proteinExistence type="inferred from homology"/>
<keyword id="KW-0010">Activator</keyword>
<keyword id="KW-0963">Cytoplasm</keyword>
<keyword id="KW-0238">DNA-binding</keyword>
<keyword id="KW-1185">Reference proteome</keyword>
<keyword id="KW-0677">Repeat</keyword>
<keyword id="KW-0684">Rhamnose metabolism</keyword>
<keyword id="KW-0804">Transcription</keyword>
<keyword id="KW-0805">Transcription regulation</keyword>
<evidence type="ECO:0000255" key="1">
    <source>
        <dbReference type="HAMAP-Rule" id="MF_01533"/>
    </source>
</evidence>
<organism>
    <name type="scientific">Pectobacterium atrosepticum (strain SCRI 1043 / ATCC BAA-672)</name>
    <name type="common">Erwinia carotovora subsp. atroseptica</name>
    <dbReference type="NCBI Taxonomy" id="218491"/>
    <lineage>
        <taxon>Bacteria</taxon>
        <taxon>Pseudomonadati</taxon>
        <taxon>Pseudomonadota</taxon>
        <taxon>Gammaproteobacteria</taxon>
        <taxon>Enterobacterales</taxon>
        <taxon>Pectobacteriaceae</taxon>
        <taxon>Pectobacterium</taxon>
    </lineage>
</organism>
<protein>
    <recommendedName>
        <fullName evidence="1">HTH-type transcriptional activator RhaR</fullName>
    </recommendedName>
    <alternativeName>
        <fullName evidence="1">L-rhamnose operon transcriptional activator RhaR</fullName>
    </alternativeName>
</protein>
<sequence>MATAIRGLKLQTEDYFLTDKNAVMVAERHPQPVFPLHHHDFDELVIVWRGNGLHLWNDVPYRITRGDMFYVSAHDRHSYESVHELELDNILYIRNRLTLSADWQTLLPSGELPQSQRHWCLGSEGMDTIREKVDALTQECMKSDALSLQLSEALLLQIALLAARYRHSPDSPQLADAHQLDMLMNALRASIAAPFRFEAFCEQHHFSARSLRSRFKEQTGMSVPHYLRQLRLCKAMELLRYDLQTIGDVAALCGFEDSNYFSVVFHQAFGVSPSAYRQRFLNVE</sequence>
<reference key="1">
    <citation type="journal article" date="2004" name="Proc. Natl. Acad. Sci. U.S.A.">
        <title>Genome sequence of the enterobacterial phytopathogen Erwinia carotovora subsp. atroseptica and characterization of virulence factors.</title>
        <authorList>
            <person name="Bell K.S."/>
            <person name="Sebaihia M."/>
            <person name="Pritchard L."/>
            <person name="Holden M.T.G."/>
            <person name="Hyman L.J."/>
            <person name="Holeva M.C."/>
            <person name="Thomson N.R."/>
            <person name="Bentley S.D."/>
            <person name="Churcher L.J.C."/>
            <person name="Mungall K."/>
            <person name="Atkin R."/>
            <person name="Bason N."/>
            <person name="Brooks K."/>
            <person name="Chillingworth T."/>
            <person name="Clark K."/>
            <person name="Doggett J."/>
            <person name="Fraser A."/>
            <person name="Hance Z."/>
            <person name="Hauser H."/>
            <person name="Jagels K."/>
            <person name="Moule S."/>
            <person name="Norbertczak H."/>
            <person name="Ormond D."/>
            <person name="Price C."/>
            <person name="Quail M.A."/>
            <person name="Sanders M."/>
            <person name="Walker D."/>
            <person name="Whitehead S."/>
            <person name="Salmond G.P.C."/>
            <person name="Birch P.R.J."/>
            <person name="Parkhill J."/>
            <person name="Toth I.K."/>
        </authorList>
    </citation>
    <scope>NUCLEOTIDE SEQUENCE [LARGE SCALE GENOMIC DNA]</scope>
    <source>
        <strain>SCRI 1043 / ATCC BAA-672</strain>
    </source>
</reference>
<dbReference type="EMBL" id="BX950851">
    <property type="protein sequence ID" value="CAG73357.1"/>
    <property type="molecule type" value="Genomic_DNA"/>
</dbReference>
<dbReference type="RefSeq" id="WP_011092064.1">
    <property type="nucleotide sequence ID" value="NC_004547.2"/>
</dbReference>
<dbReference type="SMR" id="Q6DA21"/>
<dbReference type="STRING" id="218491.ECA0442"/>
<dbReference type="DNASU" id="2884602"/>
<dbReference type="KEGG" id="eca:ECA0442"/>
<dbReference type="PATRIC" id="fig|218491.5.peg.447"/>
<dbReference type="eggNOG" id="COG1917">
    <property type="taxonomic scope" value="Bacteria"/>
</dbReference>
<dbReference type="eggNOG" id="COG4977">
    <property type="taxonomic scope" value="Bacteria"/>
</dbReference>
<dbReference type="HOGENOM" id="CLU_000445_88_5_6"/>
<dbReference type="OrthoDB" id="2547276at2"/>
<dbReference type="Proteomes" id="UP000007966">
    <property type="component" value="Chromosome"/>
</dbReference>
<dbReference type="GO" id="GO:0005737">
    <property type="term" value="C:cytoplasm"/>
    <property type="evidence" value="ECO:0007669"/>
    <property type="project" value="UniProtKB-SubCell"/>
</dbReference>
<dbReference type="GO" id="GO:0003700">
    <property type="term" value="F:DNA-binding transcription factor activity"/>
    <property type="evidence" value="ECO:0007669"/>
    <property type="project" value="UniProtKB-UniRule"/>
</dbReference>
<dbReference type="GO" id="GO:0043565">
    <property type="term" value="F:sequence-specific DNA binding"/>
    <property type="evidence" value="ECO:0007669"/>
    <property type="project" value="InterPro"/>
</dbReference>
<dbReference type="GO" id="GO:0045893">
    <property type="term" value="P:positive regulation of DNA-templated transcription"/>
    <property type="evidence" value="ECO:0007669"/>
    <property type="project" value="UniProtKB-UniRule"/>
</dbReference>
<dbReference type="GO" id="GO:0019299">
    <property type="term" value="P:rhamnose metabolic process"/>
    <property type="evidence" value="ECO:0007669"/>
    <property type="project" value="UniProtKB-UniRule"/>
</dbReference>
<dbReference type="CDD" id="cd06977">
    <property type="entry name" value="cupin_RhaR_RhaS-like_N"/>
    <property type="match status" value="1"/>
</dbReference>
<dbReference type="Gene3D" id="1.10.10.60">
    <property type="entry name" value="Homeodomain-like"/>
    <property type="match status" value="1"/>
</dbReference>
<dbReference type="Gene3D" id="2.60.120.10">
    <property type="entry name" value="Jelly Rolls"/>
    <property type="match status" value="1"/>
</dbReference>
<dbReference type="HAMAP" id="MF_01533">
    <property type="entry name" value="HTH_type_RhaR"/>
    <property type="match status" value="1"/>
</dbReference>
<dbReference type="InterPro" id="IPR003313">
    <property type="entry name" value="AraC-bd"/>
</dbReference>
<dbReference type="InterPro" id="IPR050204">
    <property type="entry name" value="AraC_XylS_family_regulators"/>
</dbReference>
<dbReference type="InterPro" id="IPR009057">
    <property type="entry name" value="Homeodomain-like_sf"/>
</dbReference>
<dbReference type="InterPro" id="IPR018060">
    <property type="entry name" value="HTH_AraC"/>
</dbReference>
<dbReference type="InterPro" id="IPR047220">
    <property type="entry name" value="RhaR_RhaS-like_N"/>
</dbReference>
<dbReference type="InterPro" id="IPR014710">
    <property type="entry name" value="RmlC-like_jellyroll"/>
</dbReference>
<dbReference type="InterPro" id="IPR011051">
    <property type="entry name" value="RmlC_Cupin_sf"/>
</dbReference>
<dbReference type="InterPro" id="IPR023699">
    <property type="entry name" value="Tscrpt_act_RhaR"/>
</dbReference>
<dbReference type="InterPro" id="IPR020449">
    <property type="entry name" value="Tscrpt_reg_AraC-type_HTH"/>
</dbReference>
<dbReference type="PANTHER" id="PTHR46796:SF13">
    <property type="entry name" value="HTH-TYPE TRANSCRIPTIONAL ACTIVATOR RHAS"/>
    <property type="match status" value="1"/>
</dbReference>
<dbReference type="PANTHER" id="PTHR46796">
    <property type="entry name" value="HTH-TYPE TRANSCRIPTIONAL ACTIVATOR RHAS-RELATED"/>
    <property type="match status" value="1"/>
</dbReference>
<dbReference type="Pfam" id="PF02311">
    <property type="entry name" value="AraC_binding"/>
    <property type="match status" value="1"/>
</dbReference>
<dbReference type="Pfam" id="PF12833">
    <property type="entry name" value="HTH_18"/>
    <property type="match status" value="1"/>
</dbReference>
<dbReference type="PRINTS" id="PR00032">
    <property type="entry name" value="HTHARAC"/>
</dbReference>
<dbReference type="SMART" id="SM00342">
    <property type="entry name" value="HTH_ARAC"/>
    <property type="match status" value="1"/>
</dbReference>
<dbReference type="SUPFAM" id="SSF46689">
    <property type="entry name" value="Homeodomain-like"/>
    <property type="match status" value="2"/>
</dbReference>
<dbReference type="SUPFAM" id="SSF51182">
    <property type="entry name" value="RmlC-like cupins"/>
    <property type="match status" value="1"/>
</dbReference>
<dbReference type="PROSITE" id="PS01124">
    <property type="entry name" value="HTH_ARAC_FAMILY_2"/>
    <property type="match status" value="1"/>
</dbReference>
<comment type="function">
    <text evidence="1">Activates expression of the rhaSR operon in response to L-rhamnose.</text>
</comment>
<comment type="subunit">
    <text evidence="1">Binds DNA as a dimer.</text>
</comment>
<comment type="subcellular location">
    <subcellularLocation>
        <location evidence="1">Cytoplasm</location>
    </subcellularLocation>
</comment>
<name>RHAR_PECAS</name>
<accession>Q6DA21</accession>